<sequence>MVEDILAPGLRVVFCGINPGLSSAGTGFPFAHPANRFWKVIYQAGFTDRQLKPQEAQHLLDYRCGVTKLVDRPTVQANEVSKQELHAGGRKLIEKIEDYQPQALAILGKQAYEQGFSQRGAQWGKQTLTIGSTQIWVLPNPSGLSRVSLEKLVEAYRELDQALVVRGR</sequence>
<gene>
    <name evidence="1" type="primary">mug</name>
    <name type="ordered locus">ECP_3158</name>
</gene>
<dbReference type="EC" id="3.2.2.28" evidence="1"/>
<dbReference type="EMBL" id="CP000247">
    <property type="protein sequence ID" value="ABG71141.1"/>
    <property type="molecule type" value="Genomic_DNA"/>
</dbReference>
<dbReference type="RefSeq" id="WP_000228937.1">
    <property type="nucleotide sequence ID" value="NC_008253.1"/>
</dbReference>
<dbReference type="SMR" id="Q0TD38"/>
<dbReference type="GeneID" id="93778924"/>
<dbReference type="KEGG" id="ecp:ECP_3158"/>
<dbReference type="HOGENOM" id="CLU_042829_3_1_6"/>
<dbReference type="Proteomes" id="UP000009182">
    <property type="component" value="Chromosome"/>
</dbReference>
<dbReference type="GO" id="GO:0005737">
    <property type="term" value="C:cytoplasm"/>
    <property type="evidence" value="ECO:0007669"/>
    <property type="project" value="UniProtKB-SubCell"/>
</dbReference>
<dbReference type="GO" id="GO:0003677">
    <property type="term" value="F:DNA binding"/>
    <property type="evidence" value="ECO:0007669"/>
    <property type="project" value="UniProtKB-KW"/>
</dbReference>
<dbReference type="GO" id="GO:0008263">
    <property type="term" value="F:pyrimidine-specific mismatch base pair DNA N-glycosylase activity"/>
    <property type="evidence" value="ECO:0007669"/>
    <property type="project" value="UniProtKB-UniRule"/>
</dbReference>
<dbReference type="GO" id="GO:0004844">
    <property type="term" value="F:uracil DNA N-glycosylase activity"/>
    <property type="evidence" value="ECO:0007669"/>
    <property type="project" value="TreeGrafter"/>
</dbReference>
<dbReference type="GO" id="GO:0006285">
    <property type="term" value="P:base-excision repair, AP site formation"/>
    <property type="evidence" value="ECO:0007669"/>
    <property type="project" value="UniProtKB-UniRule"/>
</dbReference>
<dbReference type="CDD" id="cd10028">
    <property type="entry name" value="UDG-F2_TDG_MUG"/>
    <property type="match status" value="1"/>
</dbReference>
<dbReference type="FunFam" id="3.40.470.10:FF:000003">
    <property type="entry name" value="G/U mismatch-specific DNA glycosylase"/>
    <property type="match status" value="1"/>
</dbReference>
<dbReference type="Gene3D" id="3.40.470.10">
    <property type="entry name" value="Uracil-DNA glycosylase-like domain"/>
    <property type="match status" value="1"/>
</dbReference>
<dbReference type="HAMAP" id="MF_01956">
    <property type="entry name" value="MUG"/>
    <property type="match status" value="1"/>
</dbReference>
<dbReference type="InterPro" id="IPR015637">
    <property type="entry name" value="MUG/TDG"/>
</dbReference>
<dbReference type="InterPro" id="IPR023502">
    <property type="entry name" value="MUG_bact"/>
</dbReference>
<dbReference type="InterPro" id="IPR005122">
    <property type="entry name" value="Uracil-DNA_glycosylase-like"/>
</dbReference>
<dbReference type="InterPro" id="IPR036895">
    <property type="entry name" value="Uracil-DNA_glycosylase-like_sf"/>
</dbReference>
<dbReference type="NCBIfam" id="NF007570">
    <property type="entry name" value="PRK10201.1"/>
    <property type="match status" value="1"/>
</dbReference>
<dbReference type="PANTHER" id="PTHR12159">
    <property type="entry name" value="G/T AND G/U MISMATCH-SPECIFIC DNA GLYCOSYLASE"/>
    <property type="match status" value="1"/>
</dbReference>
<dbReference type="PANTHER" id="PTHR12159:SF9">
    <property type="entry name" value="G_T MISMATCH-SPECIFIC THYMINE DNA GLYCOSYLASE"/>
    <property type="match status" value="1"/>
</dbReference>
<dbReference type="Pfam" id="PF03167">
    <property type="entry name" value="UDG"/>
    <property type="match status" value="1"/>
</dbReference>
<dbReference type="SUPFAM" id="SSF52141">
    <property type="entry name" value="Uracil-DNA glycosylase-like"/>
    <property type="match status" value="1"/>
</dbReference>
<accession>Q0TD38</accession>
<feature type="chain" id="PRO_1000070790" description="G/U mismatch-specific DNA glycosylase">
    <location>
        <begin position="1"/>
        <end position="168"/>
    </location>
</feature>
<organism>
    <name type="scientific">Escherichia coli O6:K15:H31 (strain 536 / UPEC)</name>
    <dbReference type="NCBI Taxonomy" id="362663"/>
    <lineage>
        <taxon>Bacteria</taxon>
        <taxon>Pseudomonadati</taxon>
        <taxon>Pseudomonadota</taxon>
        <taxon>Gammaproteobacteria</taxon>
        <taxon>Enterobacterales</taxon>
        <taxon>Enterobacteriaceae</taxon>
        <taxon>Escherichia</taxon>
    </lineage>
</organism>
<proteinExistence type="inferred from homology"/>
<protein>
    <recommendedName>
        <fullName evidence="1">G/U mismatch-specific DNA glycosylase</fullName>
        <ecNumber evidence="1">3.2.2.28</ecNumber>
    </recommendedName>
    <alternativeName>
        <fullName evidence="1">Double-strand-specific uracil glycosylase</fullName>
    </alternativeName>
    <alternativeName>
        <fullName evidence="1">Mismatch-specific uracil DNA-glycosylase</fullName>
        <shortName evidence="1">MUG</shortName>
    </alternativeName>
</protein>
<comment type="function">
    <text evidence="1">Excises ethenocytosine and uracil, which can arise by alkylation or deamination of cytosine, respectively, from the corresponding mispairs with guanine in ds-DNA. It is capable of hydrolyzing the carbon-nitrogen bond between the sugar-phosphate backbone of the DNA and the mispaired base. The complementary strand guanine functions in substrate recognition. Required for DNA damage lesion repair in stationary-phase cells.</text>
</comment>
<comment type="catalytic activity">
    <reaction evidence="1">
        <text>Specifically hydrolyzes mismatched double-stranded DNA and polynucleotides, releasing free uracil.</text>
        <dbReference type="EC" id="3.2.2.28"/>
    </reaction>
</comment>
<comment type="subunit">
    <text evidence="1">Binds DNA as a monomer.</text>
</comment>
<comment type="subcellular location">
    <subcellularLocation>
        <location evidence="1">Cytoplasm</location>
    </subcellularLocation>
</comment>
<comment type="similarity">
    <text evidence="1">Belongs to the uracil-DNA glycosylase (UDG) superfamily. TDG/mug family.</text>
</comment>
<reference key="1">
    <citation type="journal article" date="2006" name="Mol. Microbiol.">
        <title>Role of pathogenicity island-associated integrases in the genome plasticity of uropathogenic Escherichia coli strain 536.</title>
        <authorList>
            <person name="Hochhut B."/>
            <person name="Wilde C."/>
            <person name="Balling G."/>
            <person name="Middendorf B."/>
            <person name="Dobrindt U."/>
            <person name="Brzuszkiewicz E."/>
            <person name="Gottschalk G."/>
            <person name="Carniel E."/>
            <person name="Hacker J."/>
        </authorList>
    </citation>
    <scope>NUCLEOTIDE SEQUENCE [LARGE SCALE GENOMIC DNA]</scope>
    <source>
        <strain>536 / UPEC</strain>
    </source>
</reference>
<evidence type="ECO:0000255" key="1">
    <source>
        <dbReference type="HAMAP-Rule" id="MF_01956"/>
    </source>
</evidence>
<keyword id="KW-0963">Cytoplasm</keyword>
<keyword id="KW-0227">DNA damage</keyword>
<keyword id="KW-0228">DNA excision</keyword>
<keyword id="KW-0234">DNA repair</keyword>
<keyword id="KW-0238">DNA-binding</keyword>
<keyword id="KW-0378">Hydrolase</keyword>
<name>MUG_ECOL5</name>